<accession>C5CGE1</accession>
<sequence length="179" mass="20355">MLTRAKKEQLVQEMTDRFSKASLILFTDYKGMDVQTISELRGQLYEKFEDKARYQVAKNTLIRLALRNASYEEEEWKEQVTGTTAILTIVDADPIEAIKIVYDFSKKKKLPVLRGCYLEKVFHDESKIPDLAQLPSREQLIAMVVSGFAAPISGLVYSLNGIISKLVYALNAIKDKKSE</sequence>
<feature type="chain" id="PRO_1000205445" description="Large ribosomal subunit protein uL10">
    <location>
        <begin position="1"/>
        <end position="179"/>
    </location>
</feature>
<comment type="function">
    <text evidence="1">Forms part of the ribosomal stalk, playing a central role in the interaction of the ribosome with GTP-bound translation factors.</text>
</comment>
<comment type="subunit">
    <text evidence="1">Part of the ribosomal stalk of the 50S ribosomal subunit. The N-terminus interacts with L11 and the large rRNA to form the base of the stalk. The C-terminus forms an elongated spine to which L12 dimers bind in a sequential fashion forming a multimeric L10(L12)X complex.</text>
</comment>
<comment type="similarity">
    <text evidence="1">Belongs to the universal ribosomal protein uL10 family.</text>
</comment>
<organism>
    <name type="scientific">Kosmotoga olearia (strain ATCC BAA-1733 / DSM 21960 / TBF 19.5.1)</name>
    <dbReference type="NCBI Taxonomy" id="521045"/>
    <lineage>
        <taxon>Bacteria</taxon>
        <taxon>Thermotogati</taxon>
        <taxon>Thermotogota</taxon>
        <taxon>Thermotogae</taxon>
        <taxon>Kosmotogales</taxon>
        <taxon>Kosmotogaceae</taxon>
        <taxon>Kosmotoga</taxon>
    </lineage>
</organism>
<proteinExistence type="inferred from homology"/>
<gene>
    <name evidence="1" type="primary">rplJ</name>
    <name type="ordered locus">Kole_1840</name>
</gene>
<dbReference type="EMBL" id="CP001634">
    <property type="protein sequence ID" value="ACR80522.1"/>
    <property type="molecule type" value="Genomic_DNA"/>
</dbReference>
<dbReference type="RefSeq" id="WP_015869165.1">
    <property type="nucleotide sequence ID" value="NC_012785.1"/>
</dbReference>
<dbReference type="SMR" id="C5CGE1"/>
<dbReference type="STRING" id="521045.Kole_1840"/>
<dbReference type="KEGG" id="kol:Kole_1840"/>
<dbReference type="eggNOG" id="COG0244">
    <property type="taxonomic scope" value="Bacteria"/>
</dbReference>
<dbReference type="HOGENOM" id="CLU_092227_1_2_0"/>
<dbReference type="OrthoDB" id="9808307at2"/>
<dbReference type="Proteomes" id="UP000002382">
    <property type="component" value="Chromosome"/>
</dbReference>
<dbReference type="GO" id="GO:1990904">
    <property type="term" value="C:ribonucleoprotein complex"/>
    <property type="evidence" value="ECO:0007669"/>
    <property type="project" value="UniProtKB-KW"/>
</dbReference>
<dbReference type="GO" id="GO:0005840">
    <property type="term" value="C:ribosome"/>
    <property type="evidence" value="ECO:0007669"/>
    <property type="project" value="UniProtKB-KW"/>
</dbReference>
<dbReference type="GO" id="GO:0070180">
    <property type="term" value="F:large ribosomal subunit rRNA binding"/>
    <property type="evidence" value="ECO:0007669"/>
    <property type="project" value="UniProtKB-UniRule"/>
</dbReference>
<dbReference type="GO" id="GO:0006412">
    <property type="term" value="P:translation"/>
    <property type="evidence" value="ECO:0007669"/>
    <property type="project" value="UniProtKB-UniRule"/>
</dbReference>
<dbReference type="CDD" id="cd05797">
    <property type="entry name" value="Ribosomal_L10"/>
    <property type="match status" value="1"/>
</dbReference>
<dbReference type="Gene3D" id="3.30.70.1730">
    <property type="match status" value="1"/>
</dbReference>
<dbReference type="Gene3D" id="6.10.250.290">
    <property type="match status" value="1"/>
</dbReference>
<dbReference type="HAMAP" id="MF_00362">
    <property type="entry name" value="Ribosomal_uL10"/>
    <property type="match status" value="1"/>
</dbReference>
<dbReference type="InterPro" id="IPR001790">
    <property type="entry name" value="Ribosomal_uL10"/>
</dbReference>
<dbReference type="InterPro" id="IPR043141">
    <property type="entry name" value="Ribosomal_uL10-like_sf"/>
</dbReference>
<dbReference type="InterPro" id="IPR022973">
    <property type="entry name" value="Ribosomal_uL10_bac"/>
</dbReference>
<dbReference type="InterPro" id="IPR047865">
    <property type="entry name" value="Ribosomal_uL10_bac_type"/>
</dbReference>
<dbReference type="NCBIfam" id="NF000955">
    <property type="entry name" value="PRK00099.1-1"/>
    <property type="match status" value="1"/>
</dbReference>
<dbReference type="PANTHER" id="PTHR11560">
    <property type="entry name" value="39S RIBOSOMAL PROTEIN L10, MITOCHONDRIAL"/>
    <property type="match status" value="1"/>
</dbReference>
<dbReference type="Pfam" id="PF00466">
    <property type="entry name" value="Ribosomal_L10"/>
    <property type="match status" value="1"/>
</dbReference>
<dbReference type="SUPFAM" id="SSF160369">
    <property type="entry name" value="Ribosomal protein L10-like"/>
    <property type="match status" value="1"/>
</dbReference>
<reference key="1">
    <citation type="submission" date="2009-06" db="EMBL/GenBank/DDBJ databases">
        <title>Complete sequence of Thermotogales bacterium TBF 19.5.1.</title>
        <authorList>
            <consortium name="US DOE Joint Genome Institute"/>
            <person name="Lucas S."/>
            <person name="Copeland A."/>
            <person name="Lapidus A."/>
            <person name="Glavina del Rio T."/>
            <person name="Tice H."/>
            <person name="Bruce D."/>
            <person name="Goodwin L."/>
            <person name="Pitluck S."/>
            <person name="Chertkov O."/>
            <person name="Brettin T."/>
            <person name="Detter J.C."/>
            <person name="Han C."/>
            <person name="Schmutz J."/>
            <person name="Larimer F."/>
            <person name="Land M."/>
            <person name="Hauser L."/>
            <person name="Kyrpides N."/>
            <person name="Ovchinnikova G."/>
            <person name="Noll K."/>
        </authorList>
    </citation>
    <scope>NUCLEOTIDE SEQUENCE [LARGE SCALE GENOMIC DNA]</scope>
    <source>
        <strain>ATCC BAA-1733 / DSM 21960 / TBF 19.5.1</strain>
    </source>
</reference>
<protein>
    <recommendedName>
        <fullName evidence="1">Large ribosomal subunit protein uL10</fullName>
    </recommendedName>
    <alternativeName>
        <fullName evidence="2">50S ribosomal protein L10</fullName>
    </alternativeName>
</protein>
<name>RL10_KOSOT</name>
<evidence type="ECO:0000255" key="1">
    <source>
        <dbReference type="HAMAP-Rule" id="MF_00362"/>
    </source>
</evidence>
<evidence type="ECO:0000305" key="2"/>
<keyword id="KW-1185">Reference proteome</keyword>
<keyword id="KW-0687">Ribonucleoprotein</keyword>
<keyword id="KW-0689">Ribosomal protein</keyword>
<keyword id="KW-0694">RNA-binding</keyword>
<keyword id="KW-0699">rRNA-binding</keyword>